<name>GLPK_TRYBB</name>
<dbReference type="EC" id="2.7.1.30" evidence="3 4"/>
<dbReference type="EMBL" id="AF132295">
    <property type="protein sequence ID" value="AAF61320.1"/>
    <property type="molecule type" value="Genomic_DNA"/>
</dbReference>
<dbReference type="EMBL" id="AJ319055">
    <property type="protein sequence ID" value="CAC67800.1"/>
    <property type="molecule type" value="mRNA"/>
</dbReference>
<dbReference type="PDB" id="8Y1T">
    <property type="method" value="X-ray"/>
    <property type="resolution" value="2.40 A"/>
    <property type="chains" value="A/B=1-512"/>
</dbReference>
<dbReference type="PDBsum" id="8Y1T"/>
<dbReference type="SMR" id="Q9NJP9"/>
<dbReference type="BRENDA" id="2.7.1.30">
    <property type="organism ID" value="6520"/>
</dbReference>
<dbReference type="SABIO-RK" id="Q9NJP9"/>
<dbReference type="UniPathway" id="UPA00618">
    <property type="reaction ID" value="UER00672"/>
</dbReference>
<dbReference type="GO" id="GO:0020015">
    <property type="term" value="C:glycosome"/>
    <property type="evidence" value="ECO:0000314"/>
    <property type="project" value="GeneDB"/>
</dbReference>
<dbReference type="GO" id="GO:0005739">
    <property type="term" value="C:mitochondrion"/>
    <property type="evidence" value="ECO:0007669"/>
    <property type="project" value="TreeGrafter"/>
</dbReference>
<dbReference type="GO" id="GO:0005524">
    <property type="term" value="F:ATP binding"/>
    <property type="evidence" value="ECO:0000314"/>
    <property type="project" value="GeneDB"/>
</dbReference>
<dbReference type="GO" id="GO:0004370">
    <property type="term" value="F:glycerol kinase activity"/>
    <property type="evidence" value="ECO:0000314"/>
    <property type="project" value="UniProtKB"/>
</dbReference>
<dbReference type="GO" id="GO:0019563">
    <property type="term" value="P:glycerol catabolic process"/>
    <property type="evidence" value="ECO:0007669"/>
    <property type="project" value="UniProtKB-UniPathway"/>
</dbReference>
<dbReference type="GO" id="GO:0046167">
    <property type="term" value="P:glycerol-3-phosphate biosynthetic process"/>
    <property type="evidence" value="ECO:0007669"/>
    <property type="project" value="TreeGrafter"/>
</dbReference>
<dbReference type="GO" id="GO:0006072">
    <property type="term" value="P:glycerol-3-phosphate metabolic process"/>
    <property type="evidence" value="ECO:0000314"/>
    <property type="project" value="UniProtKB"/>
</dbReference>
<dbReference type="GO" id="GO:0006096">
    <property type="term" value="P:glycolytic process"/>
    <property type="evidence" value="ECO:0000303"/>
    <property type="project" value="UniProtKB"/>
</dbReference>
<dbReference type="GO" id="GO:0006641">
    <property type="term" value="P:triglyceride metabolic process"/>
    <property type="evidence" value="ECO:0007669"/>
    <property type="project" value="TreeGrafter"/>
</dbReference>
<dbReference type="CDD" id="cd07792">
    <property type="entry name" value="ASKHA_NBD_FGGY_GK1-3-like"/>
    <property type="match status" value="1"/>
</dbReference>
<dbReference type="FunFam" id="3.30.420.40:FF:000086">
    <property type="entry name" value="Glycerol kinase"/>
    <property type="match status" value="1"/>
</dbReference>
<dbReference type="FunFam" id="3.30.420.40:FF:000108">
    <property type="entry name" value="Glycerol kinase, glycosomal"/>
    <property type="match status" value="1"/>
</dbReference>
<dbReference type="Gene3D" id="3.30.420.40">
    <property type="match status" value="2"/>
</dbReference>
<dbReference type="InterPro" id="IPR043129">
    <property type="entry name" value="ATPase_NBD"/>
</dbReference>
<dbReference type="InterPro" id="IPR000577">
    <property type="entry name" value="Carb_kinase_FGGY"/>
</dbReference>
<dbReference type="InterPro" id="IPR018483">
    <property type="entry name" value="Carb_kinase_FGGY_CS"/>
</dbReference>
<dbReference type="InterPro" id="IPR018485">
    <property type="entry name" value="FGGY_C"/>
</dbReference>
<dbReference type="InterPro" id="IPR018484">
    <property type="entry name" value="FGGY_N"/>
</dbReference>
<dbReference type="InterPro" id="IPR042018">
    <property type="entry name" value="GK1-3_metazoan-type"/>
</dbReference>
<dbReference type="InterPro" id="IPR005999">
    <property type="entry name" value="Glycerol_kin"/>
</dbReference>
<dbReference type="NCBIfam" id="TIGR01311">
    <property type="entry name" value="glycerol_kin"/>
    <property type="match status" value="1"/>
</dbReference>
<dbReference type="NCBIfam" id="NF000756">
    <property type="entry name" value="PRK00047.1"/>
    <property type="match status" value="1"/>
</dbReference>
<dbReference type="PANTHER" id="PTHR10196:SF69">
    <property type="entry name" value="GLYCEROL KINASE"/>
    <property type="match status" value="1"/>
</dbReference>
<dbReference type="PANTHER" id="PTHR10196">
    <property type="entry name" value="SUGAR KINASE"/>
    <property type="match status" value="1"/>
</dbReference>
<dbReference type="Pfam" id="PF02782">
    <property type="entry name" value="FGGY_C"/>
    <property type="match status" value="1"/>
</dbReference>
<dbReference type="Pfam" id="PF00370">
    <property type="entry name" value="FGGY_N"/>
    <property type="match status" value="1"/>
</dbReference>
<dbReference type="PIRSF" id="PIRSF000538">
    <property type="entry name" value="GlpK"/>
    <property type="match status" value="1"/>
</dbReference>
<dbReference type="SUPFAM" id="SSF53067">
    <property type="entry name" value="Actin-like ATPase domain"/>
    <property type="match status" value="2"/>
</dbReference>
<dbReference type="PROSITE" id="PS00445">
    <property type="entry name" value="FGGY_KINASES_2"/>
    <property type="match status" value="1"/>
</dbReference>
<accession>Q9NJP9</accession>
<accession>Q95PL3</accession>
<gene>
    <name type="primary">GK</name>
    <name type="synonym">GLK1</name>
</gene>
<evidence type="ECO:0000250" key="1"/>
<evidence type="ECO:0000255" key="2"/>
<evidence type="ECO:0000269" key="3">
    <source>
    </source>
</evidence>
<evidence type="ECO:0000269" key="4">
    <source>
    </source>
</evidence>
<evidence type="ECO:0000303" key="5">
    <source>
    </source>
</evidence>
<evidence type="ECO:0000305" key="6"/>
<evidence type="ECO:0000305" key="7">
    <source>
    </source>
</evidence>
<evidence type="ECO:0000305" key="8">
    <source>
    </source>
</evidence>
<evidence type="ECO:0000312" key="9">
    <source>
        <dbReference type="EMBL" id="AAF61320.1"/>
    </source>
</evidence>
<organism evidence="9">
    <name type="scientific">Trypanosoma brucei brucei</name>
    <dbReference type="NCBI Taxonomy" id="5702"/>
    <lineage>
        <taxon>Eukaryota</taxon>
        <taxon>Discoba</taxon>
        <taxon>Euglenozoa</taxon>
        <taxon>Kinetoplastea</taxon>
        <taxon>Metakinetoplastina</taxon>
        <taxon>Trypanosomatida</taxon>
        <taxon>Trypanosomatidae</taxon>
        <taxon>Trypanosoma</taxon>
    </lineage>
</organism>
<proteinExistence type="evidence at protein level"/>
<feature type="chain" id="PRO_0000059541" description="Glycerol kinase, glycosomal">
    <location>
        <begin position="1"/>
        <end position="512"/>
    </location>
</feature>
<feature type="short sequence motif" description="Microbody targeting signal" evidence="2">
    <location>
        <begin position="510"/>
        <end position="512"/>
    </location>
</feature>
<feature type="binding site" evidence="1">
    <location>
        <position position="11"/>
    </location>
    <ligand>
        <name>substrate</name>
    </ligand>
</feature>
<feature type="binding site" evidence="1">
    <location>
        <position position="15"/>
    </location>
    <ligand>
        <name>ATP</name>
        <dbReference type="ChEBI" id="CHEBI:30616"/>
    </ligand>
</feature>
<feature type="binding site" evidence="1">
    <location>
        <position position="84"/>
    </location>
    <ligand>
        <name>substrate</name>
    </ligand>
</feature>
<feature type="binding site" evidence="1">
    <location>
        <position position="139"/>
    </location>
    <ligand>
        <name>substrate</name>
    </ligand>
</feature>
<feature type="binding site" evidence="1">
    <location>
        <position position="254"/>
    </location>
    <ligand>
        <name>substrate</name>
    </ligand>
</feature>
<feature type="binding site" evidence="1">
    <location>
        <position position="276"/>
    </location>
    <ligand>
        <name>ATP</name>
        <dbReference type="ChEBI" id="CHEBI:30616"/>
    </ligand>
</feature>
<feature type="binding site" evidence="1">
    <location>
        <position position="321"/>
    </location>
    <ligand>
        <name>ATP</name>
        <dbReference type="ChEBI" id="CHEBI:30616"/>
    </ligand>
</feature>
<feature type="binding site" evidence="1">
    <location>
        <begin position="422"/>
        <end position="426"/>
    </location>
    <ligand>
        <name>ATP</name>
        <dbReference type="ChEBI" id="CHEBI:30616"/>
    </ligand>
</feature>
<feature type="sequence variant" evidence="4">
    <original>Y</original>
    <variation>I</variation>
    <location>
        <position position="3"/>
    </location>
</feature>
<feature type="mutagenesis site" description="Increased affinity for glycerol and glycerol 3-phosphate." evidence="3">
    <original>A</original>
    <variation>S</variation>
    <location>
        <position position="141"/>
    </location>
</feature>
<feature type="sequence conflict" description="In Ref. 2; CAC67800." evidence="6" ref="2">
    <original>KW</original>
    <variation>SG</variation>
    <location>
        <begin position="508"/>
        <end position="509"/>
    </location>
</feature>
<comment type="function">
    <text evidence="3 4 5">Catalyzes the phosphorylation of glycerol using ATP (PubMed:10759857, PubMed:11154065). Under anoxic conditions, when glycerol 3-phosphate accumulates in the glycosome, it catalyzes the reverse reaction, maintaining the ATP balance (PubMed:10759857, PubMed:11154065). Key enzyme for the survival of bloodstream forms under anoxic conditions (PubMed:11154065).</text>
</comment>
<comment type="catalytic activity">
    <reaction evidence="3 4">
        <text>glycerol + ATP = sn-glycerol 3-phosphate + ADP + H(+)</text>
        <dbReference type="Rhea" id="RHEA:21644"/>
        <dbReference type="ChEBI" id="CHEBI:15378"/>
        <dbReference type="ChEBI" id="CHEBI:17754"/>
        <dbReference type="ChEBI" id="CHEBI:30616"/>
        <dbReference type="ChEBI" id="CHEBI:57597"/>
        <dbReference type="ChEBI" id="CHEBI:456216"/>
        <dbReference type="EC" id="2.7.1.30"/>
    </reaction>
    <physiologicalReaction direction="left-to-right" evidence="3 4">
        <dbReference type="Rhea" id="RHEA:21645"/>
    </physiologicalReaction>
    <physiologicalReaction direction="right-to-left" evidence="3 4">
        <dbReference type="Rhea" id="RHEA:21646"/>
    </physiologicalReaction>
</comment>
<comment type="biophysicochemical properties">
    <kinetics>
        <KM evidence="3">0.24 mM for ATP</KM>
        <KM evidence="4">0.246 mM for ATP</KM>
        <KM evidence="3">0.56 mM for ADP</KM>
        <KM evidence="4">3.29 mM for ADP</KM>
        <KM evidence="3">0.44 mM for glycerol</KM>
        <KM evidence="4">0.169 mM for glycerol</KM>
        <KM evidence="3">3.83 mM for sn-glycerol 3-phosphate</KM>
        <KM evidence="4">12.56 mM for sn-glycerol 3-phosphate</KM>
    </kinetics>
    <phDependence>
        <text evidence="3 4">Optimum pH is 8.0 (PubMed:10759857). Optimum pH is 8.5 for glycerol phosphorylation and 7.0 for ATP formation (PubMed:11154065).</text>
    </phDependence>
</comment>
<comment type="pathway">
    <text evidence="7 8">Polyol metabolism; glycerol degradation via glycerol kinase pathway; sn-glycerol 3-phosphate from glycerol: step 1/1.</text>
</comment>
<comment type="subcellular location">
    <subcellularLocation>
        <location evidence="4">Glycosome</location>
    </subcellularLocation>
</comment>
<comment type="similarity">
    <text evidence="6">Belongs to the FGGY kinase family.</text>
</comment>
<sequence length="512" mass="56366">MKYVGSIDQGTTSTRFIIFDERQRPVSVHQVPHTQHTPHPGWLEHDPMEIFRSACKCMSVAIAKLRQKDASFRKIEAIGITNQRETTVAWDRVTKEPLCYAPVWNDLRTYDITKKVTAELGGGDSMFASKITGLPVSTYFAAFKMRWMLENVPAVADACRRGTLCFGTIDTWLMYKLSGGKAFVTDVTNASRTFLMDLRTRKWSPELCEKLKIPMETLPEIRSNSELFGYVETDECGVAAALNERTPIMGSIGDQQSALFGNMCFEKGEAKNTYGTGCFLLMNVGEEARFSKHGLLSTVGFQVGRDGPCYYALEGAIACAGATVEWMRRNMNLFSHITECEKLARSVPGTQGIVFVPAFSGLLAPYWDPSARGTIVGMTLKTTRAHVIRAALQAIALQLNDVVGSMKRDAGLNLSSLRVDGGLSKNGLLMEIQASLLGVDILVPSMHETTALGAALCAGLAAGVWTSLEEVKAVSRRENSWKTVSPSGSAMEREAMIAEWREALKRTKWAKL</sequence>
<keyword id="KW-0002">3D-structure</keyword>
<keyword id="KW-0067">ATP-binding</keyword>
<keyword id="KW-0319">Glycerol metabolism</keyword>
<keyword id="KW-0324">Glycolysis</keyword>
<keyword id="KW-0327">Glycosome</keyword>
<keyword id="KW-0418">Kinase</keyword>
<keyword id="KW-0547">Nucleotide-binding</keyword>
<keyword id="KW-0576">Peroxisome</keyword>
<keyword id="KW-0808">Transferase</keyword>
<reference evidence="6" key="1">
    <citation type="journal article" date="2000" name="Eur. J. Biochem.">
        <title>Glycerol kinase of Trypanosoma brucei. Cloning, molecular characterization and mutagenesis.</title>
        <authorList>
            <person name="Kralova I."/>
            <person name="Rigden D.J."/>
            <person name="Opperdoes F.R."/>
            <person name="Michels P.A.M."/>
        </authorList>
    </citation>
    <scope>NUCLEOTIDE SEQUENCE [GENOMIC DNA]</scope>
    <scope>MUTAGENESIS OF ALA-141</scope>
    <scope>FUNCTION</scope>
    <scope>CATALYTIC ACTIVITY</scope>
    <scope>BIOPHYSICOCHEMICAL PROPERTIES</scope>
    <source>
        <strain>427</strain>
    </source>
</reference>
<reference evidence="6" key="2">
    <citation type="journal article" date="2000" name="Biol. Chem.">
        <title>Cloning, heterologous expression and kinetic analysis of glycerol kinase (TbGLK1) from Trypanosoma brucei.</title>
        <authorList>
            <person name="Steinborn K."/>
            <person name="Szallies A."/>
            <person name="Mecke D."/>
            <person name="Duszenko M."/>
        </authorList>
    </citation>
    <scope>NUCLEOTIDE SEQUENCE [MRNA]</scope>
    <scope>VARIANT ILE-3</scope>
    <scope>FUNCTION</scope>
    <scope>CATALYTIC ACTIVITY</scope>
    <scope>BIOPHYSICOCHEMICAL PROPERTIES</scope>
    <scope>SUBCELLULAR LOCATION</scope>
    <source>
        <strain>MITat 1.2</strain>
    </source>
</reference>
<protein>
    <recommendedName>
        <fullName>Glycerol kinase, glycosomal</fullName>
        <shortName>GK</shortName>
        <shortName>Glycerokinase</shortName>
        <ecNumber evidence="3 4">2.7.1.30</ecNumber>
    </recommendedName>
    <alternativeName>
        <fullName>ATP:glycerol 3-phosphotransferase</fullName>
    </alternativeName>
</protein>